<organism>
    <name type="scientific">Stenotrophomonas maltophilia (strain R551-3)</name>
    <dbReference type="NCBI Taxonomy" id="391008"/>
    <lineage>
        <taxon>Bacteria</taxon>
        <taxon>Pseudomonadati</taxon>
        <taxon>Pseudomonadota</taxon>
        <taxon>Gammaproteobacteria</taxon>
        <taxon>Lysobacterales</taxon>
        <taxon>Lysobacteraceae</taxon>
        <taxon>Stenotrophomonas</taxon>
        <taxon>Stenotrophomonas maltophilia group</taxon>
    </lineage>
</organism>
<accession>B4SJ34</accession>
<name>UBIE_STRM5</name>
<gene>
    <name evidence="1" type="primary">ubiE</name>
    <name type="ordered locus">Smal_3460</name>
</gene>
<feature type="chain" id="PRO_1000187818" description="Ubiquinone/menaquinone biosynthesis C-methyltransferase UbiE">
    <location>
        <begin position="1"/>
        <end position="253"/>
    </location>
</feature>
<feature type="binding site" evidence="1">
    <location>
        <position position="76"/>
    </location>
    <ligand>
        <name>S-adenosyl-L-methionine</name>
        <dbReference type="ChEBI" id="CHEBI:59789"/>
    </ligand>
</feature>
<feature type="binding site" evidence="1">
    <location>
        <position position="97"/>
    </location>
    <ligand>
        <name>S-adenosyl-L-methionine</name>
        <dbReference type="ChEBI" id="CHEBI:59789"/>
    </ligand>
</feature>
<feature type="binding site" evidence="1">
    <location>
        <begin position="125"/>
        <end position="126"/>
    </location>
    <ligand>
        <name>S-adenosyl-L-methionine</name>
        <dbReference type="ChEBI" id="CHEBI:59789"/>
    </ligand>
</feature>
<dbReference type="EC" id="2.1.1.163" evidence="1"/>
<dbReference type="EC" id="2.1.1.201" evidence="1"/>
<dbReference type="EMBL" id="CP001111">
    <property type="protein sequence ID" value="ACF53159.1"/>
    <property type="molecule type" value="Genomic_DNA"/>
</dbReference>
<dbReference type="RefSeq" id="WP_012512137.1">
    <property type="nucleotide sequence ID" value="NC_011071.1"/>
</dbReference>
<dbReference type="SMR" id="B4SJ34"/>
<dbReference type="STRING" id="391008.Smal_3460"/>
<dbReference type="KEGG" id="smt:Smal_3460"/>
<dbReference type="eggNOG" id="COG2226">
    <property type="taxonomic scope" value="Bacteria"/>
</dbReference>
<dbReference type="HOGENOM" id="CLU_037990_0_0_6"/>
<dbReference type="OrthoDB" id="9808140at2"/>
<dbReference type="UniPathway" id="UPA00079">
    <property type="reaction ID" value="UER00169"/>
</dbReference>
<dbReference type="UniPathway" id="UPA00232"/>
<dbReference type="Proteomes" id="UP000001867">
    <property type="component" value="Chromosome"/>
</dbReference>
<dbReference type="GO" id="GO:0008425">
    <property type="term" value="F:2-methoxy-6-polyprenyl-1,4-benzoquinol methyltransferase activity"/>
    <property type="evidence" value="ECO:0007669"/>
    <property type="project" value="UniProtKB-UniRule"/>
</dbReference>
<dbReference type="GO" id="GO:0043770">
    <property type="term" value="F:demethylmenaquinone methyltransferase activity"/>
    <property type="evidence" value="ECO:0007669"/>
    <property type="project" value="UniProtKB-UniRule"/>
</dbReference>
<dbReference type="GO" id="GO:0009060">
    <property type="term" value="P:aerobic respiration"/>
    <property type="evidence" value="ECO:0007669"/>
    <property type="project" value="UniProtKB-UniRule"/>
</dbReference>
<dbReference type="GO" id="GO:0009234">
    <property type="term" value="P:menaquinone biosynthetic process"/>
    <property type="evidence" value="ECO:0007669"/>
    <property type="project" value="UniProtKB-UniRule"/>
</dbReference>
<dbReference type="GO" id="GO:0032259">
    <property type="term" value="P:methylation"/>
    <property type="evidence" value="ECO:0007669"/>
    <property type="project" value="UniProtKB-KW"/>
</dbReference>
<dbReference type="CDD" id="cd02440">
    <property type="entry name" value="AdoMet_MTases"/>
    <property type="match status" value="1"/>
</dbReference>
<dbReference type="Gene3D" id="3.40.50.150">
    <property type="entry name" value="Vaccinia Virus protein VP39"/>
    <property type="match status" value="1"/>
</dbReference>
<dbReference type="HAMAP" id="MF_01813">
    <property type="entry name" value="MenG_UbiE_methyltr"/>
    <property type="match status" value="1"/>
</dbReference>
<dbReference type="InterPro" id="IPR029063">
    <property type="entry name" value="SAM-dependent_MTases_sf"/>
</dbReference>
<dbReference type="InterPro" id="IPR004033">
    <property type="entry name" value="UbiE/COQ5_MeTrFase"/>
</dbReference>
<dbReference type="InterPro" id="IPR023576">
    <property type="entry name" value="UbiE/COQ5_MeTrFase_CS"/>
</dbReference>
<dbReference type="NCBIfam" id="TIGR01934">
    <property type="entry name" value="MenG_MenH_UbiE"/>
    <property type="match status" value="1"/>
</dbReference>
<dbReference type="NCBIfam" id="NF001242">
    <property type="entry name" value="PRK00216.1-3"/>
    <property type="match status" value="1"/>
</dbReference>
<dbReference type="NCBIfam" id="NF001244">
    <property type="entry name" value="PRK00216.1-5"/>
    <property type="match status" value="1"/>
</dbReference>
<dbReference type="PANTHER" id="PTHR43591:SF24">
    <property type="entry name" value="2-METHOXY-6-POLYPRENYL-1,4-BENZOQUINOL METHYLASE, MITOCHONDRIAL"/>
    <property type="match status" value="1"/>
</dbReference>
<dbReference type="PANTHER" id="PTHR43591">
    <property type="entry name" value="METHYLTRANSFERASE"/>
    <property type="match status" value="1"/>
</dbReference>
<dbReference type="Pfam" id="PF01209">
    <property type="entry name" value="Ubie_methyltran"/>
    <property type="match status" value="1"/>
</dbReference>
<dbReference type="SUPFAM" id="SSF53335">
    <property type="entry name" value="S-adenosyl-L-methionine-dependent methyltransferases"/>
    <property type="match status" value="1"/>
</dbReference>
<dbReference type="PROSITE" id="PS51608">
    <property type="entry name" value="SAM_MT_UBIE"/>
    <property type="match status" value="1"/>
</dbReference>
<dbReference type="PROSITE" id="PS01183">
    <property type="entry name" value="UBIE_1"/>
    <property type="match status" value="1"/>
</dbReference>
<dbReference type="PROSITE" id="PS01184">
    <property type="entry name" value="UBIE_2"/>
    <property type="match status" value="1"/>
</dbReference>
<proteinExistence type="inferred from homology"/>
<evidence type="ECO:0000255" key="1">
    <source>
        <dbReference type="HAMAP-Rule" id="MF_01813"/>
    </source>
</evidence>
<keyword id="KW-0474">Menaquinone biosynthesis</keyword>
<keyword id="KW-0489">Methyltransferase</keyword>
<keyword id="KW-0949">S-adenosyl-L-methionine</keyword>
<keyword id="KW-0808">Transferase</keyword>
<keyword id="KW-0831">Ubiquinone biosynthesis</keyword>
<comment type="function">
    <text evidence="1">Methyltransferase required for the conversion of demethylmenaquinol (DMKH2) to menaquinol (MKH2) and the conversion of 2-polyprenyl-6-methoxy-1,4-benzoquinol (DDMQH2) to 2-polyprenyl-3-methyl-6-methoxy-1,4-benzoquinol (DMQH2).</text>
</comment>
<comment type="catalytic activity">
    <reaction evidence="1">
        <text>a 2-demethylmenaquinol + S-adenosyl-L-methionine = a menaquinol + S-adenosyl-L-homocysteine + H(+)</text>
        <dbReference type="Rhea" id="RHEA:42640"/>
        <dbReference type="Rhea" id="RHEA-COMP:9539"/>
        <dbReference type="Rhea" id="RHEA-COMP:9563"/>
        <dbReference type="ChEBI" id="CHEBI:15378"/>
        <dbReference type="ChEBI" id="CHEBI:18151"/>
        <dbReference type="ChEBI" id="CHEBI:55437"/>
        <dbReference type="ChEBI" id="CHEBI:57856"/>
        <dbReference type="ChEBI" id="CHEBI:59789"/>
        <dbReference type="EC" id="2.1.1.163"/>
    </reaction>
</comment>
<comment type="catalytic activity">
    <reaction evidence="1">
        <text>a 2-methoxy-6-(all-trans-polyprenyl)benzene-1,4-diol + S-adenosyl-L-methionine = a 5-methoxy-2-methyl-3-(all-trans-polyprenyl)benzene-1,4-diol + S-adenosyl-L-homocysteine + H(+)</text>
        <dbReference type="Rhea" id="RHEA:28286"/>
        <dbReference type="Rhea" id="RHEA-COMP:10858"/>
        <dbReference type="Rhea" id="RHEA-COMP:10859"/>
        <dbReference type="ChEBI" id="CHEBI:15378"/>
        <dbReference type="ChEBI" id="CHEBI:57856"/>
        <dbReference type="ChEBI" id="CHEBI:59789"/>
        <dbReference type="ChEBI" id="CHEBI:84166"/>
        <dbReference type="ChEBI" id="CHEBI:84167"/>
        <dbReference type="EC" id="2.1.1.201"/>
    </reaction>
</comment>
<comment type="pathway">
    <text evidence="1">Quinol/quinone metabolism; menaquinone biosynthesis; menaquinol from 1,4-dihydroxy-2-naphthoate: step 2/2.</text>
</comment>
<comment type="pathway">
    <text evidence="1">Cofactor biosynthesis; ubiquinone biosynthesis.</text>
</comment>
<comment type="similarity">
    <text evidence="1">Belongs to the class I-like SAM-binding methyltransferase superfamily. MenG/UbiE family.</text>
</comment>
<reference key="1">
    <citation type="submission" date="2008-06" db="EMBL/GenBank/DDBJ databases">
        <title>Complete sequence of Stenotrophomonas maltophilia R551-3.</title>
        <authorList>
            <consortium name="US DOE Joint Genome Institute"/>
            <person name="Lucas S."/>
            <person name="Copeland A."/>
            <person name="Lapidus A."/>
            <person name="Glavina del Rio T."/>
            <person name="Dalin E."/>
            <person name="Tice H."/>
            <person name="Pitluck S."/>
            <person name="Chain P."/>
            <person name="Malfatti S."/>
            <person name="Shin M."/>
            <person name="Vergez L."/>
            <person name="Lang D."/>
            <person name="Schmutz J."/>
            <person name="Larimer F."/>
            <person name="Land M."/>
            <person name="Hauser L."/>
            <person name="Kyrpides N."/>
            <person name="Mikhailova N."/>
            <person name="Taghavi S."/>
            <person name="Monchy S."/>
            <person name="Newman L."/>
            <person name="Vangronsveld J."/>
            <person name="van der Lelie D."/>
            <person name="Richardson P."/>
        </authorList>
    </citation>
    <scope>NUCLEOTIDE SEQUENCE [LARGE SCALE GENOMIC DNA]</scope>
    <source>
        <strain>R551-3</strain>
    </source>
</reference>
<sequence>MSESPYKSGTTHFGFRDVAAKDKQKLVGQVFTSVARNYDLMNDLMSMGVHRAWKRYYVATAQVKPGDRVLDLAGGTGDIAALLKERVGVEGSVVLGDINAGMLSVGRDRLTNRGLVLGLDYVQCNAEALPFPDNSFDLVTIAFGLRNVTDKDAGLREMYRVLKVGGQARVLEFSEVTADWFKPIYDFHSFKILPKLGKLFANDSDSYQYLAESIRKHPPQEELKAMMGQAGFERCHYKNLTGGIVSIHSGYKL</sequence>
<protein>
    <recommendedName>
        <fullName evidence="1">Ubiquinone/menaquinone biosynthesis C-methyltransferase UbiE</fullName>
        <ecNumber evidence="1">2.1.1.163</ecNumber>
        <ecNumber evidence="1">2.1.1.201</ecNumber>
    </recommendedName>
    <alternativeName>
        <fullName evidence="1">2-methoxy-6-polyprenyl-1,4-benzoquinol methylase</fullName>
    </alternativeName>
    <alternativeName>
        <fullName evidence="1">Demethylmenaquinone methyltransferase</fullName>
    </alternativeName>
</protein>